<protein>
    <recommendedName>
        <fullName evidence="1">tRNA dimethylallyltransferase</fullName>
        <ecNumber evidence="1">2.5.1.75</ecNumber>
    </recommendedName>
    <alternativeName>
        <fullName evidence="1">Dimethylallyl diphosphate:tRNA dimethylallyltransferase</fullName>
        <shortName evidence="1">DMAPP:tRNA dimethylallyltransferase</shortName>
        <shortName evidence="1">DMATase</shortName>
    </alternativeName>
    <alternativeName>
        <fullName evidence="1">Isopentenyl-diphosphate:tRNA isopentenyltransferase</fullName>
        <shortName evidence="1">IPP transferase</shortName>
        <shortName evidence="1">IPPT</shortName>
        <shortName evidence="1">IPTase</shortName>
    </alternativeName>
</protein>
<feature type="chain" id="PRO_0000163968" description="tRNA dimethylallyltransferase">
    <location>
        <begin position="1"/>
        <end position="316"/>
    </location>
</feature>
<feature type="region of interest" description="Interaction with substrate tRNA" evidence="1">
    <location>
        <begin position="42"/>
        <end position="45"/>
    </location>
</feature>
<feature type="region of interest" description="Interaction with substrate tRNA" evidence="1">
    <location>
        <begin position="166"/>
        <end position="170"/>
    </location>
</feature>
<feature type="region of interest" description="Interaction with substrate tRNA" evidence="1">
    <location>
        <begin position="247"/>
        <end position="252"/>
    </location>
</feature>
<feature type="binding site" evidence="1">
    <location>
        <begin position="17"/>
        <end position="24"/>
    </location>
    <ligand>
        <name>ATP</name>
        <dbReference type="ChEBI" id="CHEBI:30616"/>
    </ligand>
</feature>
<feature type="binding site" evidence="1">
    <location>
        <begin position="19"/>
        <end position="24"/>
    </location>
    <ligand>
        <name>substrate</name>
    </ligand>
</feature>
<feature type="site" description="Interaction with substrate tRNA" evidence="1">
    <location>
        <position position="108"/>
    </location>
</feature>
<feature type="site" description="Interaction with substrate tRNA" evidence="1">
    <location>
        <position position="130"/>
    </location>
</feature>
<feature type="sequence conflict" description="In Ref. 2; AAO71860." evidence="2" ref="2">
    <original>G</original>
    <variation>E</variation>
    <location>
        <position position="237"/>
    </location>
</feature>
<comment type="function">
    <text evidence="1">Catalyzes the transfer of a dimethylallyl group onto the adenine at position 37 in tRNAs that read codons beginning with uridine, leading to the formation of N6-(dimethylallyl)adenosine (i(6)A).</text>
</comment>
<comment type="catalytic activity">
    <reaction evidence="1">
        <text>adenosine(37) in tRNA + dimethylallyl diphosphate = N(6)-dimethylallyladenosine(37) in tRNA + diphosphate</text>
        <dbReference type="Rhea" id="RHEA:26482"/>
        <dbReference type="Rhea" id="RHEA-COMP:10162"/>
        <dbReference type="Rhea" id="RHEA-COMP:10375"/>
        <dbReference type="ChEBI" id="CHEBI:33019"/>
        <dbReference type="ChEBI" id="CHEBI:57623"/>
        <dbReference type="ChEBI" id="CHEBI:74411"/>
        <dbReference type="ChEBI" id="CHEBI:74415"/>
        <dbReference type="EC" id="2.5.1.75"/>
    </reaction>
</comment>
<comment type="cofactor">
    <cofactor evidence="1">
        <name>Mg(2+)</name>
        <dbReference type="ChEBI" id="CHEBI:18420"/>
    </cofactor>
</comment>
<comment type="subunit">
    <text evidence="1">Monomer.</text>
</comment>
<comment type="similarity">
    <text evidence="1">Belongs to the IPP transferase family.</text>
</comment>
<evidence type="ECO:0000255" key="1">
    <source>
        <dbReference type="HAMAP-Rule" id="MF_00185"/>
    </source>
</evidence>
<evidence type="ECO:0000305" key="2"/>
<name>MIAA_SALTI</name>
<sequence>MNDVSKVSLPKAIFLMGPTASGKTALAIELRKVLPVELISVDSALIYRGMDIGTAKPNADELKAAPHRLLDIRDPSQAYSAADFRRDALAQMAEITAAGRIPLLVGGTMLYFKALLEGLSPLPSADPEVRSRIEQQAAELGWEALHQQLQEIDPVAAARIHPNDPQRLSRALEVFFISGKTLTELTQTSGDALPYQVHQFAIAPASRELLHQRIELRFHQMLASGFEAEVRALFARGDLHTDLPSIRCVGYRQMWSYIEGEISYDEMVYRGVCSTRQLAKRQMTWLRGWEGVRWLDSENPDRARKEVLQVVGAIAD</sequence>
<organism>
    <name type="scientific">Salmonella typhi</name>
    <dbReference type="NCBI Taxonomy" id="90370"/>
    <lineage>
        <taxon>Bacteria</taxon>
        <taxon>Pseudomonadati</taxon>
        <taxon>Pseudomonadota</taxon>
        <taxon>Gammaproteobacteria</taxon>
        <taxon>Enterobacterales</taxon>
        <taxon>Enterobacteriaceae</taxon>
        <taxon>Salmonella</taxon>
    </lineage>
</organism>
<gene>
    <name evidence="1" type="primary">miaA</name>
    <name type="ordered locus">STY4717</name>
    <name type="ordered locus">t4411</name>
</gene>
<keyword id="KW-0067">ATP-binding</keyword>
<keyword id="KW-0460">Magnesium</keyword>
<keyword id="KW-0547">Nucleotide-binding</keyword>
<keyword id="KW-0808">Transferase</keyword>
<keyword id="KW-0819">tRNA processing</keyword>
<dbReference type="EC" id="2.5.1.75" evidence="1"/>
<dbReference type="EMBL" id="AL513382">
    <property type="protein sequence ID" value="CAD06837.1"/>
    <property type="molecule type" value="Genomic_DNA"/>
</dbReference>
<dbReference type="EMBL" id="AE014613">
    <property type="protein sequence ID" value="AAO71860.1"/>
    <property type="molecule type" value="Genomic_DNA"/>
</dbReference>
<dbReference type="RefSeq" id="NP_458796.1">
    <property type="nucleotide sequence ID" value="NC_003198.1"/>
</dbReference>
<dbReference type="RefSeq" id="WP_001000739.1">
    <property type="nucleotide sequence ID" value="NZ_WSUR01000012.1"/>
</dbReference>
<dbReference type="SMR" id="Q8Z186"/>
<dbReference type="STRING" id="220341.gene:17588537"/>
<dbReference type="KEGG" id="stt:t4411"/>
<dbReference type="KEGG" id="sty:STY4717"/>
<dbReference type="PATRIC" id="fig|220341.7.peg.4818"/>
<dbReference type="eggNOG" id="COG0324">
    <property type="taxonomic scope" value="Bacteria"/>
</dbReference>
<dbReference type="HOGENOM" id="CLU_032616_0_0_6"/>
<dbReference type="OMA" id="VPHYLID"/>
<dbReference type="OrthoDB" id="9776390at2"/>
<dbReference type="Proteomes" id="UP000000541">
    <property type="component" value="Chromosome"/>
</dbReference>
<dbReference type="Proteomes" id="UP000002670">
    <property type="component" value="Chromosome"/>
</dbReference>
<dbReference type="GO" id="GO:0005524">
    <property type="term" value="F:ATP binding"/>
    <property type="evidence" value="ECO:0007669"/>
    <property type="project" value="UniProtKB-UniRule"/>
</dbReference>
<dbReference type="GO" id="GO:0052381">
    <property type="term" value="F:tRNA dimethylallyltransferase activity"/>
    <property type="evidence" value="ECO:0007669"/>
    <property type="project" value="UniProtKB-UniRule"/>
</dbReference>
<dbReference type="GO" id="GO:0006400">
    <property type="term" value="P:tRNA modification"/>
    <property type="evidence" value="ECO:0007669"/>
    <property type="project" value="TreeGrafter"/>
</dbReference>
<dbReference type="FunFam" id="1.10.20.140:FF:000001">
    <property type="entry name" value="tRNA dimethylallyltransferase"/>
    <property type="match status" value="1"/>
</dbReference>
<dbReference type="FunFam" id="1.10.287.890:FF:000001">
    <property type="entry name" value="tRNA dimethylallyltransferase"/>
    <property type="match status" value="1"/>
</dbReference>
<dbReference type="Gene3D" id="1.10.20.140">
    <property type="match status" value="1"/>
</dbReference>
<dbReference type="Gene3D" id="1.10.287.890">
    <property type="entry name" value="Crystal structure of tRNA isopentenylpyrophosphate transferase (bh2366) domain"/>
    <property type="match status" value="1"/>
</dbReference>
<dbReference type="Gene3D" id="3.40.50.300">
    <property type="entry name" value="P-loop containing nucleotide triphosphate hydrolases"/>
    <property type="match status" value="1"/>
</dbReference>
<dbReference type="HAMAP" id="MF_00185">
    <property type="entry name" value="IPP_trans"/>
    <property type="match status" value="1"/>
</dbReference>
<dbReference type="InterPro" id="IPR039657">
    <property type="entry name" value="Dimethylallyltransferase"/>
</dbReference>
<dbReference type="InterPro" id="IPR018022">
    <property type="entry name" value="IPT"/>
</dbReference>
<dbReference type="InterPro" id="IPR027417">
    <property type="entry name" value="P-loop_NTPase"/>
</dbReference>
<dbReference type="NCBIfam" id="TIGR00174">
    <property type="entry name" value="miaA"/>
    <property type="match status" value="1"/>
</dbReference>
<dbReference type="PANTHER" id="PTHR11088">
    <property type="entry name" value="TRNA DIMETHYLALLYLTRANSFERASE"/>
    <property type="match status" value="1"/>
</dbReference>
<dbReference type="PANTHER" id="PTHR11088:SF60">
    <property type="entry name" value="TRNA DIMETHYLALLYLTRANSFERASE"/>
    <property type="match status" value="1"/>
</dbReference>
<dbReference type="Pfam" id="PF01715">
    <property type="entry name" value="IPPT"/>
    <property type="match status" value="1"/>
</dbReference>
<dbReference type="SUPFAM" id="SSF52540">
    <property type="entry name" value="P-loop containing nucleoside triphosphate hydrolases"/>
    <property type="match status" value="1"/>
</dbReference>
<reference key="1">
    <citation type="journal article" date="2001" name="Nature">
        <title>Complete genome sequence of a multiple drug resistant Salmonella enterica serovar Typhi CT18.</title>
        <authorList>
            <person name="Parkhill J."/>
            <person name="Dougan G."/>
            <person name="James K.D."/>
            <person name="Thomson N.R."/>
            <person name="Pickard D."/>
            <person name="Wain J."/>
            <person name="Churcher C.M."/>
            <person name="Mungall K.L."/>
            <person name="Bentley S.D."/>
            <person name="Holden M.T.G."/>
            <person name="Sebaihia M."/>
            <person name="Baker S."/>
            <person name="Basham D."/>
            <person name="Brooks K."/>
            <person name="Chillingworth T."/>
            <person name="Connerton P."/>
            <person name="Cronin A."/>
            <person name="Davis P."/>
            <person name="Davies R.M."/>
            <person name="Dowd L."/>
            <person name="White N."/>
            <person name="Farrar J."/>
            <person name="Feltwell T."/>
            <person name="Hamlin N."/>
            <person name="Haque A."/>
            <person name="Hien T.T."/>
            <person name="Holroyd S."/>
            <person name="Jagels K."/>
            <person name="Krogh A."/>
            <person name="Larsen T.S."/>
            <person name="Leather S."/>
            <person name="Moule S."/>
            <person name="O'Gaora P."/>
            <person name="Parry C."/>
            <person name="Quail M.A."/>
            <person name="Rutherford K.M."/>
            <person name="Simmonds M."/>
            <person name="Skelton J."/>
            <person name="Stevens K."/>
            <person name="Whitehead S."/>
            <person name="Barrell B.G."/>
        </authorList>
    </citation>
    <scope>NUCLEOTIDE SEQUENCE [LARGE SCALE GENOMIC DNA]</scope>
    <source>
        <strain>CT18</strain>
    </source>
</reference>
<reference key="2">
    <citation type="journal article" date="2003" name="J. Bacteriol.">
        <title>Comparative genomics of Salmonella enterica serovar Typhi strains Ty2 and CT18.</title>
        <authorList>
            <person name="Deng W."/>
            <person name="Liou S.-R."/>
            <person name="Plunkett G. III"/>
            <person name="Mayhew G.F."/>
            <person name="Rose D.J."/>
            <person name="Burland V."/>
            <person name="Kodoyianni V."/>
            <person name="Schwartz D.C."/>
            <person name="Blattner F.R."/>
        </authorList>
    </citation>
    <scope>NUCLEOTIDE SEQUENCE [LARGE SCALE GENOMIC DNA]</scope>
    <source>
        <strain>ATCC 700931 / Ty2</strain>
    </source>
</reference>
<accession>Q8Z186</accession>
<proteinExistence type="inferred from homology"/>